<protein>
    <recommendedName>
        <fullName>Prophage ps2 probable integrase</fullName>
    </recommendedName>
    <alternativeName>
        <fullName>Int-TnX</fullName>
    </alternativeName>
</protein>
<comment type="similarity">
    <text evidence="3">Belongs to the 'phage' integrase family.</text>
</comment>
<evidence type="ECO:0000255" key="1">
    <source>
        <dbReference type="PROSITE-ProRule" id="PRU01246"/>
    </source>
</evidence>
<evidence type="ECO:0000255" key="2">
    <source>
        <dbReference type="PROSITE-ProRule" id="PRU01248"/>
    </source>
</evidence>
<evidence type="ECO:0000305" key="3"/>
<name>P2IN_LACLA</name>
<dbReference type="EMBL" id="AF320916">
    <property type="protein sequence ID" value="AAK08223.1"/>
    <property type="molecule type" value="Genomic_DNA"/>
</dbReference>
<dbReference type="EMBL" id="AE005176">
    <property type="protein sequence ID" value="AAK04601.1"/>
    <property type="molecule type" value="Genomic_DNA"/>
</dbReference>
<dbReference type="PIR" id="G86687">
    <property type="entry name" value="G86687"/>
</dbReference>
<dbReference type="RefSeq" id="NP_266659.1">
    <property type="nucleotide sequence ID" value="NC_002662.1"/>
</dbReference>
<dbReference type="RefSeq" id="WP_010905403.1">
    <property type="nucleotide sequence ID" value="NC_002662.1"/>
</dbReference>
<dbReference type="SMR" id="Q9CI63"/>
<dbReference type="PaxDb" id="272623-L102735"/>
<dbReference type="EnsemblBacteria" id="AAK04601">
    <property type="protein sequence ID" value="AAK04601"/>
    <property type="gene ID" value="L102735"/>
</dbReference>
<dbReference type="KEGG" id="lla:L102735"/>
<dbReference type="PATRIC" id="fig|272623.7.peg.546"/>
<dbReference type="eggNOG" id="COG0582">
    <property type="taxonomic scope" value="Bacteria"/>
</dbReference>
<dbReference type="HOGENOM" id="CLU_027562_17_6_9"/>
<dbReference type="OrthoDB" id="9803188at2"/>
<dbReference type="Proteomes" id="UP000002196">
    <property type="component" value="Chromosome"/>
</dbReference>
<dbReference type="GO" id="GO:0003677">
    <property type="term" value="F:DNA binding"/>
    <property type="evidence" value="ECO:0007669"/>
    <property type="project" value="UniProtKB-KW"/>
</dbReference>
<dbReference type="GO" id="GO:0015074">
    <property type="term" value="P:DNA integration"/>
    <property type="evidence" value="ECO:0007669"/>
    <property type="project" value="UniProtKB-KW"/>
</dbReference>
<dbReference type="GO" id="GO:0006310">
    <property type="term" value="P:DNA recombination"/>
    <property type="evidence" value="ECO:0007669"/>
    <property type="project" value="UniProtKB-KW"/>
</dbReference>
<dbReference type="GO" id="GO:0075713">
    <property type="term" value="P:establishment of integrated proviral latency"/>
    <property type="evidence" value="ECO:0007669"/>
    <property type="project" value="UniProtKB-KW"/>
</dbReference>
<dbReference type="GO" id="GO:0046718">
    <property type="term" value="P:symbiont entry into host cell"/>
    <property type="evidence" value="ECO:0007669"/>
    <property type="project" value="UniProtKB-KW"/>
</dbReference>
<dbReference type="GO" id="GO:0044826">
    <property type="term" value="P:viral genome integration into host DNA"/>
    <property type="evidence" value="ECO:0007669"/>
    <property type="project" value="UniProtKB-KW"/>
</dbReference>
<dbReference type="CDD" id="cd01189">
    <property type="entry name" value="INT_ICEBs1_C_like"/>
    <property type="match status" value="1"/>
</dbReference>
<dbReference type="Gene3D" id="1.10.150.130">
    <property type="match status" value="1"/>
</dbReference>
<dbReference type="Gene3D" id="1.10.443.10">
    <property type="entry name" value="Intergrase catalytic core"/>
    <property type="match status" value="1"/>
</dbReference>
<dbReference type="InterPro" id="IPR044068">
    <property type="entry name" value="CB"/>
</dbReference>
<dbReference type="InterPro" id="IPR011010">
    <property type="entry name" value="DNA_brk_join_enz"/>
</dbReference>
<dbReference type="InterPro" id="IPR013762">
    <property type="entry name" value="Integrase-like_cat_sf"/>
</dbReference>
<dbReference type="InterPro" id="IPR002104">
    <property type="entry name" value="Integrase_catalytic"/>
</dbReference>
<dbReference type="InterPro" id="IPR010998">
    <property type="entry name" value="Integrase_recombinase_N"/>
</dbReference>
<dbReference type="InterPro" id="IPR004107">
    <property type="entry name" value="Integrase_SAM-like_N"/>
</dbReference>
<dbReference type="InterPro" id="IPR050808">
    <property type="entry name" value="Phage_Integrase"/>
</dbReference>
<dbReference type="PANTHER" id="PTHR30629">
    <property type="entry name" value="PROPHAGE INTEGRASE"/>
    <property type="match status" value="1"/>
</dbReference>
<dbReference type="PANTHER" id="PTHR30629:SF2">
    <property type="entry name" value="PROPHAGE INTEGRASE INTS-RELATED"/>
    <property type="match status" value="1"/>
</dbReference>
<dbReference type="Pfam" id="PF14659">
    <property type="entry name" value="Phage_int_SAM_3"/>
    <property type="match status" value="1"/>
</dbReference>
<dbReference type="Pfam" id="PF00589">
    <property type="entry name" value="Phage_integrase"/>
    <property type="match status" value="1"/>
</dbReference>
<dbReference type="SUPFAM" id="SSF56349">
    <property type="entry name" value="DNA breaking-rejoining enzymes"/>
    <property type="match status" value="1"/>
</dbReference>
<dbReference type="PROSITE" id="PS51900">
    <property type="entry name" value="CB"/>
    <property type="match status" value="1"/>
</dbReference>
<dbReference type="PROSITE" id="PS51898">
    <property type="entry name" value="TYR_RECOMBINASE"/>
    <property type="match status" value="1"/>
</dbReference>
<accession>Q9CI63</accession>
<organism>
    <name type="scientific">Lactococcus lactis subsp. lactis (strain IL1403)</name>
    <name type="common">Streptococcus lactis</name>
    <dbReference type="NCBI Taxonomy" id="272623"/>
    <lineage>
        <taxon>Bacteria</taxon>
        <taxon>Bacillati</taxon>
        <taxon>Bacillota</taxon>
        <taxon>Bacilli</taxon>
        <taxon>Lactobacillales</taxon>
        <taxon>Streptococcaceae</taxon>
        <taxon>Lactococcus</taxon>
    </lineage>
</organism>
<sequence>MWIENLPNGKYKYFERYRDPLTEKLKKVSVTLDKKTPRAQKVAQAELLEKIESKINNSSTSNAKFTDIAEEWWSFYKKSIKQSSISALQSSFNFIIDYFDKEIKISNVTSKVIQKFINDADCPRSKLERSKSTLNLIFDYAVDLEYIEYNPARKAKLPKKIQTVKDLEKIQNKYLEQNELKALLSELYSRPNTRRLALLAEFMSLNGCRMGEAIALKKENYKRSERKIDIHGTLDKTVGYSKGVKTTPKTASSFRTVDLSDREIEILDEIIEQNNLSKSVINDYNEMGYIFVSKRGIPLQTNSFNLAIKRANSRLKSPINKNLSSHIFRHTLISYLAENNVPLKAIVDRVGHKDGGKTTTAIYTHVTENMKSSIIDILNKKN</sequence>
<reference key="1">
    <citation type="journal article" date="1999" name="Antonie Van Leeuwenhoek">
        <title>Low-redundancy sequencing of the entire Lactococcus lactis IL1403 genome.</title>
        <authorList>
            <person name="Bolotin A."/>
            <person name="Mauger S."/>
            <person name="Malarme K."/>
            <person name="Ehrlich S.D."/>
            <person name="Sorokin A."/>
        </authorList>
    </citation>
    <scope>NUCLEOTIDE SEQUENCE [GENOMIC DNA]</scope>
    <source>
        <strain>IL1403</strain>
    </source>
</reference>
<reference key="2">
    <citation type="journal article" date="2001" name="Genome Res.">
        <title>The complete genome sequence of the lactic acid bacterium Lactococcus lactis ssp. lactis IL1403.</title>
        <authorList>
            <person name="Bolotin A."/>
            <person name="Wincker P."/>
            <person name="Mauger S."/>
            <person name="Jaillon O."/>
            <person name="Malarme K."/>
            <person name="Weissenbach J."/>
            <person name="Ehrlich S.D."/>
            <person name="Sorokin A."/>
        </authorList>
    </citation>
    <scope>NUCLEOTIDE SEQUENCE [LARGE SCALE GENOMIC DNA]</scope>
    <source>
        <strain>IL1403</strain>
    </source>
</reference>
<proteinExistence type="inferred from homology"/>
<keyword id="KW-0229">DNA integration</keyword>
<keyword id="KW-0233">DNA recombination</keyword>
<keyword id="KW-0238">DNA-binding</keyword>
<keyword id="KW-1185">Reference proteome</keyword>
<keyword id="KW-1179">Viral genome integration</keyword>
<keyword id="KW-1160">Virus entry into host cell</keyword>
<gene>
    <name type="primary">ps201</name>
    <name type="synonym">int201</name>
    <name type="ordered locus">LL0503</name>
    <name type="ORF">L102735</name>
</gene>
<feature type="chain" id="PRO_0000197560" description="Prophage ps2 probable integrase">
    <location>
        <begin position="1"/>
        <end position="382"/>
    </location>
</feature>
<feature type="domain" description="Core-binding (CB)" evidence="2">
    <location>
        <begin position="63"/>
        <end position="142"/>
    </location>
</feature>
<feature type="domain" description="Tyr recombinase" evidence="1">
    <location>
        <begin position="170"/>
        <end position="376"/>
    </location>
</feature>
<feature type="active site" evidence="1">
    <location>
        <position position="209"/>
    </location>
</feature>
<feature type="active site" evidence="1">
    <location>
        <position position="242"/>
    </location>
</feature>
<feature type="active site" evidence="1">
    <location>
        <position position="326"/>
    </location>
</feature>
<feature type="active site" evidence="1">
    <location>
        <position position="329"/>
    </location>
</feature>
<feature type="active site" evidence="1">
    <location>
        <position position="352"/>
    </location>
</feature>
<feature type="active site" description="O-(3'-phospho-DNA)-tyrosine intermediate" evidence="1">
    <location>
        <position position="363"/>
    </location>
</feature>